<accession>A8GLI8</accession>
<gene>
    <name evidence="1" type="primary">engB</name>
    <name type="ordered locus">Spro_4886</name>
</gene>
<comment type="function">
    <text evidence="1">Necessary for normal cell division and for the maintenance of normal septation.</text>
</comment>
<comment type="cofactor">
    <cofactor evidence="1">
        <name>Mg(2+)</name>
        <dbReference type="ChEBI" id="CHEBI:18420"/>
    </cofactor>
</comment>
<comment type="similarity">
    <text evidence="1">Belongs to the TRAFAC class TrmE-Era-EngA-EngB-Septin-like GTPase superfamily. EngB GTPase family.</text>
</comment>
<proteinExistence type="inferred from homology"/>
<name>ENGB_SERP5</name>
<keyword id="KW-0131">Cell cycle</keyword>
<keyword id="KW-0132">Cell division</keyword>
<keyword id="KW-0342">GTP-binding</keyword>
<keyword id="KW-0460">Magnesium</keyword>
<keyword id="KW-0479">Metal-binding</keyword>
<keyword id="KW-0547">Nucleotide-binding</keyword>
<keyword id="KW-0717">Septation</keyword>
<dbReference type="EMBL" id="CP000826">
    <property type="protein sequence ID" value="ABV43978.1"/>
    <property type="molecule type" value="Genomic_DNA"/>
</dbReference>
<dbReference type="SMR" id="A8GLI8"/>
<dbReference type="STRING" id="399741.Spro_4886"/>
<dbReference type="KEGG" id="spe:Spro_4886"/>
<dbReference type="eggNOG" id="COG0218">
    <property type="taxonomic scope" value="Bacteria"/>
</dbReference>
<dbReference type="HOGENOM" id="CLU_033732_1_2_6"/>
<dbReference type="OrthoDB" id="9804921at2"/>
<dbReference type="GO" id="GO:0005829">
    <property type="term" value="C:cytosol"/>
    <property type="evidence" value="ECO:0007669"/>
    <property type="project" value="TreeGrafter"/>
</dbReference>
<dbReference type="GO" id="GO:0005525">
    <property type="term" value="F:GTP binding"/>
    <property type="evidence" value="ECO:0007669"/>
    <property type="project" value="UniProtKB-UniRule"/>
</dbReference>
<dbReference type="GO" id="GO:0046872">
    <property type="term" value="F:metal ion binding"/>
    <property type="evidence" value="ECO:0007669"/>
    <property type="project" value="UniProtKB-KW"/>
</dbReference>
<dbReference type="GO" id="GO:0000917">
    <property type="term" value="P:division septum assembly"/>
    <property type="evidence" value="ECO:0007669"/>
    <property type="project" value="UniProtKB-KW"/>
</dbReference>
<dbReference type="CDD" id="cd01876">
    <property type="entry name" value="YihA_EngB"/>
    <property type="match status" value="1"/>
</dbReference>
<dbReference type="FunFam" id="3.40.50.300:FF:000098">
    <property type="entry name" value="Probable GTP-binding protein EngB"/>
    <property type="match status" value="1"/>
</dbReference>
<dbReference type="Gene3D" id="3.40.50.300">
    <property type="entry name" value="P-loop containing nucleotide triphosphate hydrolases"/>
    <property type="match status" value="1"/>
</dbReference>
<dbReference type="HAMAP" id="MF_00321">
    <property type="entry name" value="GTPase_EngB"/>
    <property type="match status" value="1"/>
</dbReference>
<dbReference type="InterPro" id="IPR030393">
    <property type="entry name" value="G_ENGB_dom"/>
</dbReference>
<dbReference type="InterPro" id="IPR006073">
    <property type="entry name" value="GTP-bd"/>
</dbReference>
<dbReference type="InterPro" id="IPR019987">
    <property type="entry name" value="GTP-bd_ribosome_bio_YsxC"/>
</dbReference>
<dbReference type="InterPro" id="IPR027417">
    <property type="entry name" value="P-loop_NTPase"/>
</dbReference>
<dbReference type="NCBIfam" id="TIGR03598">
    <property type="entry name" value="GTPase_YsxC"/>
    <property type="match status" value="1"/>
</dbReference>
<dbReference type="PANTHER" id="PTHR11649:SF13">
    <property type="entry name" value="ENGB-TYPE G DOMAIN-CONTAINING PROTEIN"/>
    <property type="match status" value="1"/>
</dbReference>
<dbReference type="PANTHER" id="PTHR11649">
    <property type="entry name" value="MSS1/TRME-RELATED GTP-BINDING PROTEIN"/>
    <property type="match status" value="1"/>
</dbReference>
<dbReference type="Pfam" id="PF01926">
    <property type="entry name" value="MMR_HSR1"/>
    <property type="match status" value="1"/>
</dbReference>
<dbReference type="SUPFAM" id="SSF52540">
    <property type="entry name" value="P-loop containing nucleoside triphosphate hydrolases"/>
    <property type="match status" value="1"/>
</dbReference>
<dbReference type="PROSITE" id="PS51706">
    <property type="entry name" value="G_ENGB"/>
    <property type="match status" value="1"/>
</dbReference>
<feature type="chain" id="PRO_1000059474" description="Probable GTP-binding protein EngB">
    <location>
        <begin position="1"/>
        <end position="216"/>
    </location>
</feature>
<feature type="domain" description="EngB-type G" evidence="1">
    <location>
        <begin position="27"/>
        <end position="201"/>
    </location>
</feature>
<feature type="binding site" evidence="1">
    <location>
        <begin position="35"/>
        <end position="42"/>
    </location>
    <ligand>
        <name>GTP</name>
        <dbReference type="ChEBI" id="CHEBI:37565"/>
    </ligand>
</feature>
<feature type="binding site" evidence="1">
    <location>
        <position position="42"/>
    </location>
    <ligand>
        <name>Mg(2+)</name>
        <dbReference type="ChEBI" id="CHEBI:18420"/>
    </ligand>
</feature>
<feature type="binding site" evidence="1">
    <location>
        <begin position="62"/>
        <end position="66"/>
    </location>
    <ligand>
        <name>GTP</name>
        <dbReference type="ChEBI" id="CHEBI:37565"/>
    </ligand>
</feature>
<feature type="binding site" evidence="1">
    <location>
        <position position="64"/>
    </location>
    <ligand>
        <name>Mg(2+)</name>
        <dbReference type="ChEBI" id="CHEBI:18420"/>
    </ligand>
</feature>
<feature type="binding site" evidence="1">
    <location>
        <begin position="80"/>
        <end position="83"/>
    </location>
    <ligand>
        <name>GTP</name>
        <dbReference type="ChEBI" id="CHEBI:37565"/>
    </ligand>
</feature>
<feature type="binding site" evidence="1">
    <location>
        <begin position="147"/>
        <end position="150"/>
    </location>
    <ligand>
        <name>GTP</name>
        <dbReference type="ChEBI" id="CHEBI:37565"/>
    </ligand>
</feature>
<feature type="binding site" evidence="1">
    <location>
        <begin position="180"/>
        <end position="182"/>
    </location>
    <ligand>
        <name>GTP</name>
        <dbReference type="ChEBI" id="CHEBI:37565"/>
    </ligand>
</feature>
<sequence length="216" mass="24075">MTSKNYNYHVTHFVTSAPDIRHLPGDEGIEVAFAGRSNAGKSSALNTLTNQKGLARTSKTPGRTQLINLFEVEEGIRLVDLPGYGYAEVPEEMKRKWQRALGEYLQMRNCLKGLVVLMDIRHPLKDLDQQMIQWAVEVGTPVLLLLTKADKLASGARKAQLNMVREAVVPFMGDIQVEAFSSPKKIGVDKLSQKLNTWFNEIPPEVLPEDDDTAGE</sequence>
<evidence type="ECO:0000255" key="1">
    <source>
        <dbReference type="HAMAP-Rule" id="MF_00321"/>
    </source>
</evidence>
<protein>
    <recommendedName>
        <fullName evidence="1">Probable GTP-binding protein EngB</fullName>
    </recommendedName>
</protein>
<reference key="1">
    <citation type="submission" date="2007-09" db="EMBL/GenBank/DDBJ databases">
        <title>Complete sequence of chromosome of Serratia proteamaculans 568.</title>
        <authorList>
            <consortium name="US DOE Joint Genome Institute"/>
            <person name="Copeland A."/>
            <person name="Lucas S."/>
            <person name="Lapidus A."/>
            <person name="Barry K."/>
            <person name="Glavina del Rio T."/>
            <person name="Dalin E."/>
            <person name="Tice H."/>
            <person name="Pitluck S."/>
            <person name="Chain P."/>
            <person name="Malfatti S."/>
            <person name="Shin M."/>
            <person name="Vergez L."/>
            <person name="Schmutz J."/>
            <person name="Larimer F."/>
            <person name="Land M."/>
            <person name="Hauser L."/>
            <person name="Kyrpides N."/>
            <person name="Kim E."/>
            <person name="Taghavi S."/>
            <person name="Newman L."/>
            <person name="Vangronsveld J."/>
            <person name="van der Lelie D."/>
            <person name="Richardson P."/>
        </authorList>
    </citation>
    <scope>NUCLEOTIDE SEQUENCE [LARGE SCALE GENOMIC DNA]</scope>
    <source>
        <strain>568</strain>
    </source>
</reference>
<organism>
    <name type="scientific">Serratia proteamaculans (strain 568)</name>
    <dbReference type="NCBI Taxonomy" id="399741"/>
    <lineage>
        <taxon>Bacteria</taxon>
        <taxon>Pseudomonadati</taxon>
        <taxon>Pseudomonadota</taxon>
        <taxon>Gammaproteobacteria</taxon>
        <taxon>Enterobacterales</taxon>
        <taxon>Yersiniaceae</taxon>
        <taxon>Serratia</taxon>
    </lineage>
</organism>